<evidence type="ECO:0000255" key="1"/>
<evidence type="ECO:0000269" key="2">
    <source>
    </source>
</evidence>
<reference key="1">
    <citation type="journal article" date="1996" name="Science">
        <title>Genome sequence of a human tumorigenic poxvirus: prediction of specific host response-evasion genes.</title>
        <authorList>
            <person name="Senkevich T.G."/>
            <person name="Bugert J.J."/>
            <person name="Sisler J.R."/>
            <person name="Koonin E.V."/>
            <person name="Darai G."/>
            <person name="Moss B."/>
        </authorList>
    </citation>
    <scope>NUCLEOTIDE SEQUENCE [LARGE SCALE GENOMIC DNA]</scope>
</reference>
<reference key="2">
    <citation type="journal article" date="2017" name="Virology">
        <title>The molluscum contagiosum virus protein MC163 localizes to the mitochondria and dampens mitochondrial mediated apoptotic responses.</title>
        <authorList>
            <person name="Coutu J."/>
            <person name="Ryerson M.R."/>
            <person name="Bugert J."/>
            <person name="Brian Nichols D."/>
        </authorList>
    </citation>
    <scope>FUNCTION</scope>
    <scope>SUBCELLULAR LOCATION</scope>
</reference>
<gene>
    <name type="primary">MC163R</name>
</gene>
<dbReference type="EMBL" id="U60315">
    <property type="protein sequence ID" value="AAC55291.1"/>
    <property type="molecule type" value="Genomic_DNA"/>
</dbReference>
<dbReference type="PIR" id="T30765">
    <property type="entry name" value="T30765"/>
</dbReference>
<dbReference type="RefSeq" id="NP_044114.1">
    <property type="nucleotide sequence ID" value="NC_001731.1"/>
</dbReference>
<dbReference type="GeneID" id="1487021"/>
<dbReference type="KEGG" id="vg:1487021"/>
<dbReference type="OrthoDB" id="5457at10239"/>
<dbReference type="Proteomes" id="UP000000869">
    <property type="component" value="Genome"/>
</dbReference>
<dbReference type="GO" id="GO:0033644">
    <property type="term" value="C:host cell membrane"/>
    <property type="evidence" value="ECO:0007669"/>
    <property type="project" value="UniProtKB-SubCell"/>
</dbReference>
<dbReference type="GO" id="GO:0033650">
    <property type="term" value="C:host cell mitochondrion"/>
    <property type="evidence" value="ECO:0007669"/>
    <property type="project" value="UniProtKB-SubCell"/>
</dbReference>
<dbReference type="GO" id="GO:0016020">
    <property type="term" value="C:membrane"/>
    <property type="evidence" value="ECO:0007669"/>
    <property type="project" value="UniProtKB-KW"/>
</dbReference>
<dbReference type="GO" id="GO:0052150">
    <property type="term" value="P:symbiont-mediated perturbation of host apoptosis"/>
    <property type="evidence" value="ECO:0007669"/>
    <property type="project" value="UniProtKB-KW"/>
</dbReference>
<dbReference type="InterPro" id="IPR036352">
    <property type="entry name" value="Semap_dom_sf"/>
</dbReference>
<dbReference type="SUPFAM" id="SSF101912">
    <property type="entry name" value="Sema domain"/>
    <property type="match status" value="1"/>
</dbReference>
<accession>Q98329</accession>
<comment type="function">
    <text evidence="2">Plays a role in the inhibition of host apoptosis. Prevents host TNF-alpha-induced mitochondrial membrane permeabilization and reduces caspase-3/CASP3 and PARP1 cleavage induced by the intrinsic apoptotic pathway.</text>
</comment>
<comment type="subcellular location">
    <subcellularLocation>
        <location evidence="2">Host mitochondrion</location>
    </subcellularLocation>
    <subcellularLocation>
        <location evidence="1">Host membrane</location>
        <topology evidence="1">Single-pass membrane protein</topology>
    </subcellularLocation>
</comment>
<protein>
    <recommendedName>
        <fullName>Apoptosis regulator MC163R</fullName>
    </recommendedName>
</protein>
<organismHost>
    <name type="scientific">Homo sapiens</name>
    <name type="common">Human</name>
    <dbReference type="NCBI Taxonomy" id="9606"/>
</organismHost>
<sequence>MGPRAQRARSTLRKLRRALCGRQDSPARARTPENRHFARKCARTCEHGYAHTHTCEDTPAKEHGHLGEHECLRGHGHAHAYEERCENKHKHLHAHEHTHERHGRAPRRLALTAPLPLLLLPLLLPPMILLFFLSPADAKPVLERQVFWNHSEPRASFLTPPHGPGAPPGGPFLTAVGGDGTLYLIPSNSSNPPVCVEIPLPYGPGHENVITLLLVDGGPRTPDALTVAACLEVGVSLLTTNATEPTNASNSSPRLTGSCEKLRTWALGNPPFTRVCGTGGGTPRCWALSTNGSIHDLGLDGVGYSPPQHNGTRPLLCTNTSEPHLHSCEHTAWNGDHDPQRCTRTPLDKHGQSWSPQCHKSTAPNQLGTRPPLLITKMSDENGTDYVYFLIGGSGDDYPPLLARVCEDDCWLSGHWTPRLQTVLQTNVSCANASALLKSTSGNGGPIVLLVEGEGGNGSICTYSGLDTGKHFAHTPQLGETGPRDPLVGACGHNGDVPESLAKKAREHPDLKQTLTPSGGPVALPGLDPRHVTALGTGPGLLFLGTNQSNVFLLRMNDNGRPNGSLTLFWNGTGNGNGRAGPRGPVLGLQHSSGGGAGAAGLLAVLFGDGVTVLRTEGAL</sequence>
<organism>
    <name type="scientific">Molluscum contagiosum virus subtype 1</name>
    <name type="common">MOCV</name>
    <name type="synonym">MCVI</name>
    <dbReference type="NCBI Taxonomy" id="10280"/>
    <lineage>
        <taxon>Viruses</taxon>
        <taxon>Varidnaviria</taxon>
        <taxon>Bamfordvirae</taxon>
        <taxon>Nucleocytoviricota</taxon>
        <taxon>Pokkesviricetes</taxon>
        <taxon>Chitovirales</taxon>
        <taxon>Poxviridae</taxon>
        <taxon>Chordopoxvirinae</taxon>
        <taxon>Molluscipoxvirus</taxon>
        <taxon>Molluscum contagiosum virus</taxon>
    </lineage>
</organism>
<feature type="chain" id="PRO_0000443230" description="Apoptosis regulator MC163R">
    <location>
        <begin position="1"/>
        <end position="620"/>
    </location>
</feature>
<feature type="transmembrane region" description="Helical" evidence="1">
    <location>
        <begin position="113"/>
        <end position="133"/>
    </location>
</feature>
<proteinExistence type="inferred from homology"/>
<name>MC163_MCV1</name>
<keyword id="KW-1043">Host membrane</keyword>
<keyword id="KW-1045">Host mitochondrion</keyword>
<keyword id="KW-0945">Host-virus interaction</keyword>
<keyword id="KW-0472">Membrane</keyword>
<keyword id="KW-1119">Modulation of host cell apoptosis by virus</keyword>
<keyword id="KW-1185">Reference proteome</keyword>
<keyword id="KW-0812">Transmembrane</keyword>
<keyword id="KW-1133">Transmembrane helix</keyword>